<evidence type="ECO:0000255" key="1">
    <source>
        <dbReference type="HAMAP-Rule" id="MF_00555"/>
    </source>
</evidence>
<gene>
    <name evidence="1" type="primary">asnA</name>
    <name type="ordered locus">SPG_1872</name>
</gene>
<proteinExistence type="inferred from homology"/>
<name>ASNA_STRP4</name>
<accession>B5E2G2</accession>
<keyword id="KW-0028">Amino-acid biosynthesis</keyword>
<keyword id="KW-0061">Asparagine biosynthesis</keyword>
<keyword id="KW-0067">ATP-binding</keyword>
<keyword id="KW-0963">Cytoplasm</keyword>
<keyword id="KW-0436">Ligase</keyword>
<keyword id="KW-0547">Nucleotide-binding</keyword>
<reference key="1">
    <citation type="journal article" date="2001" name="Microb. Drug Resist.">
        <title>Annotated draft genomic sequence from a Streptococcus pneumoniae type 19F clinical isolate.</title>
        <authorList>
            <person name="Dopazo J."/>
            <person name="Mendoza A."/>
            <person name="Herrero J."/>
            <person name="Caldara F."/>
            <person name="Humbert Y."/>
            <person name="Friedli L."/>
            <person name="Guerrier M."/>
            <person name="Grand-Schenk E."/>
            <person name="Gandin C."/>
            <person name="de Francesco M."/>
            <person name="Polissi A."/>
            <person name="Buell G."/>
            <person name="Feger G."/>
            <person name="Garcia E."/>
            <person name="Peitsch M."/>
            <person name="Garcia-Bustos J.F."/>
        </authorList>
    </citation>
    <scope>NUCLEOTIDE SEQUENCE [LARGE SCALE GENOMIC DNA]</scope>
    <source>
        <strain>G54</strain>
    </source>
</reference>
<reference key="2">
    <citation type="submission" date="2008-03" db="EMBL/GenBank/DDBJ databases">
        <title>Pneumococcal beta glucoside metabolism investigated by whole genome comparison.</title>
        <authorList>
            <person name="Mulas L."/>
            <person name="Trappetti C."/>
            <person name="Hakenbeck R."/>
            <person name="Iannelli F."/>
            <person name="Pozzi G."/>
            <person name="Davidsen T.M."/>
            <person name="Tettelin H."/>
            <person name="Oggioni M."/>
        </authorList>
    </citation>
    <scope>NUCLEOTIDE SEQUENCE [LARGE SCALE GENOMIC DNA]</scope>
    <source>
        <strain>G54</strain>
    </source>
</reference>
<comment type="catalytic activity">
    <reaction evidence="1">
        <text>L-aspartate + NH4(+) + ATP = L-asparagine + AMP + diphosphate + H(+)</text>
        <dbReference type="Rhea" id="RHEA:11372"/>
        <dbReference type="ChEBI" id="CHEBI:15378"/>
        <dbReference type="ChEBI" id="CHEBI:28938"/>
        <dbReference type="ChEBI" id="CHEBI:29991"/>
        <dbReference type="ChEBI" id="CHEBI:30616"/>
        <dbReference type="ChEBI" id="CHEBI:33019"/>
        <dbReference type="ChEBI" id="CHEBI:58048"/>
        <dbReference type="ChEBI" id="CHEBI:456215"/>
        <dbReference type="EC" id="6.3.1.1"/>
    </reaction>
</comment>
<comment type="pathway">
    <text evidence="1">Amino-acid biosynthesis; L-asparagine biosynthesis; L-asparagine from L-aspartate (ammonia route): step 1/1.</text>
</comment>
<comment type="subcellular location">
    <subcellularLocation>
        <location evidence="1">Cytoplasm</location>
    </subcellularLocation>
</comment>
<comment type="similarity">
    <text evidence="1">Belongs to the class-II aminoacyl-tRNA synthetase family. AsnA subfamily.</text>
</comment>
<organism>
    <name type="scientific">Streptococcus pneumoniae serotype 19F (strain G54)</name>
    <dbReference type="NCBI Taxonomy" id="512566"/>
    <lineage>
        <taxon>Bacteria</taxon>
        <taxon>Bacillati</taxon>
        <taxon>Bacillota</taxon>
        <taxon>Bacilli</taxon>
        <taxon>Lactobacillales</taxon>
        <taxon>Streptococcaceae</taxon>
        <taxon>Streptococcus</taxon>
    </lineage>
</organism>
<dbReference type="EC" id="6.3.1.1" evidence="1"/>
<dbReference type="EMBL" id="CP001015">
    <property type="protein sequence ID" value="ACF54819.1"/>
    <property type="molecule type" value="Genomic_DNA"/>
</dbReference>
<dbReference type="SMR" id="B5E2G2"/>
<dbReference type="KEGG" id="spx:SPG_1872"/>
<dbReference type="HOGENOM" id="CLU_071543_0_0_9"/>
<dbReference type="UniPathway" id="UPA00134">
    <property type="reaction ID" value="UER00194"/>
</dbReference>
<dbReference type="GO" id="GO:0005829">
    <property type="term" value="C:cytosol"/>
    <property type="evidence" value="ECO:0007669"/>
    <property type="project" value="TreeGrafter"/>
</dbReference>
<dbReference type="GO" id="GO:0004071">
    <property type="term" value="F:aspartate-ammonia ligase activity"/>
    <property type="evidence" value="ECO:0007669"/>
    <property type="project" value="UniProtKB-UniRule"/>
</dbReference>
<dbReference type="GO" id="GO:0005524">
    <property type="term" value="F:ATP binding"/>
    <property type="evidence" value="ECO:0007669"/>
    <property type="project" value="UniProtKB-UniRule"/>
</dbReference>
<dbReference type="GO" id="GO:0140096">
    <property type="term" value="F:catalytic activity, acting on a protein"/>
    <property type="evidence" value="ECO:0007669"/>
    <property type="project" value="UniProtKB-ARBA"/>
</dbReference>
<dbReference type="GO" id="GO:0016740">
    <property type="term" value="F:transferase activity"/>
    <property type="evidence" value="ECO:0007669"/>
    <property type="project" value="UniProtKB-ARBA"/>
</dbReference>
<dbReference type="GO" id="GO:0070981">
    <property type="term" value="P:L-asparagine biosynthetic process"/>
    <property type="evidence" value="ECO:0007669"/>
    <property type="project" value="UniProtKB-UniRule"/>
</dbReference>
<dbReference type="CDD" id="cd00645">
    <property type="entry name" value="AsnA"/>
    <property type="match status" value="1"/>
</dbReference>
<dbReference type="Gene3D" id="3.30.930.10">
    <property type="entry name" value="Bira Bifunctional Protein, Domain 2"/>
    <property type="match status" value="1"/>
</dbReference>
<dbReference type="HAMAP" id="MF_00555">
    <property type="entry name" value="AsnA"/>
    <property type="match status" value="1"/>
</dbReference>
<dbReference type="InterPro" id="IPR006195">
    <property type="entry name" value="aa-tRNA-synth_II"/>
</dbReference>
<dbReference type="InterPro" id="IPR045864">
    <property type="entry name" value="aa-tRNA-synth_II/BPL/LPL"/>
</dbReference>
<dbReference type="InterPro" id="IPR004618">
    <property type="entry name" value="AsnA"/>
</dbReference>
<dbReference type="NCBIfam" id="TIGR00669">
    <property type="entry name" value="asnA"/>
    <property type="match status" value="1"/>
</dbReference>
<dbReference type="PANTHER" id="PTHR30073">
    <property type="entry name" value="ASPARTATE--AMMONIA LIGASE"/>
    <property type="match status" value="1"/>
</dbReference>
<dbReference type="PANTHER" id="PTHR30073:SF5">
    <property type="entry name" value="ASPARTATE--AMMONIA LIGASE"/>
    <property type="match status" value="1"/>
</dbReference>
<dbReference type="Pfam" id="PF03590">
    <property type="entry name" value="AsnA"/>
    <property type="match status" value="1"/>
</dbReference>
<dbReference type="PIRSF" id="PIRSF001555">
    <property type="entry name" value="Asp_ammon_ligase"/>
    <property type="match status" value="1"/>
</dbReference>
<dbReference type="SUPFAM" id="SSF55681">
    <property type="entry name" value="Class II aaRS and biotin synthetases"/>
    <property type="match status" value="1"/>
</dbReference>
<dbReference type="PROSITE" id="PS50862">
    <property type="entry name" value="AA_TRNA_LIGASE_II"/>
    <property type="match status" value="1"/>
</dbReference>
<feature type="chain" id="PRO_1000129132" description="Aspartate--ammonia ligase">
    <location>
        <begin position="1"/>
        <end position="330"/>
    </location>
</feature>
<sequence>MKKSFIHQQEEISFVKNTFTQYLKDKLEVVEVQGPILSKVGDGMQDNLSGVENPVSVKVLQIPDATYEVVHSLAKWKRHTLARFGFGEGEGLFVHMKALRPDEDSLDATHSVYVDQWDWEKVIPNGKRNIVYLKETVEKIYKAIRLTELAVEARYDIESILPKQITFIHTEELVERYPDLTPKERENAICKEFGAVFLIGIGGELPDGKPHDGRAPDYDDWTSESENGYKGLNGDILVWNESLGGAFELSSMGIRVDEETLRRQVEITGDEDRLELEWHKSLLNGLFPLTIGGGIGQSRMAMFLLRKRHIGEVQTSVWPQEVRDTYENIL</sequence>
<protein>
    <recommendedName>
        <fullName evidence="1">Aspartate--ammonia ligase</fullName>
        <ecNumber evidence="1">6.3.1.1</ecNumber>
    </recommendedName>
    <alternativeName>
        <fullName evidence="1">Asparagine synthetase A</fullName>
    </alternativeName>
</protein>